<name>ATPG_ECO57</name>
<accession>P0ABA8</accession>
<accession>P00837</accession>
<accession>P00838</accession>
<sequence>MAGAKEIRSKIASVQNTQKITKAMEMVAASKMRKSQDRMAASRPYAETMRKVIGHLAHGNLEYKHPYLEDRDVKRVGYLVVSTDRGLCGGLNINLFKKLLAEMKTWTDKGVQCDLAMIGSKGVSFFNSVGGNVVAQVTGMGDNPSLSELIGPVKVMLQAYDEGRLDKLYIVSNKFINTMSQVPTISQLLPLPASDDDDLKHKSWDYLYEPDPKALLDTLLRRYVESQVYQGVVENLASEQAARMVAMKAATDNGGSLIKELQLVYNKARQASITQELTEIVSGAAAV</sequence>
<protein>
    <recommendedName>
        <fullName>ATP synthase gamma chain</fullName>
    </recommendedName>
    <alternativeName>
        <fullName>ATP synthase F1 sector gamma subunit</fullName>
    </alternativeName>
    <alternativeName>
        <fullName>F-ATPase gamma subunit</fullName>
    </alternativeName>
</protein>
<keyword id="KW-0066">ATP synthesis</keyword>
<keyword id="KW-0997">Cell inner membrane</keyword>
<keyword id="KW-1003">Cell membrane</keyword>
<keyword id="KW-0139">CF(1)</keyword>
<keyword id="KW-0375">Hydrogen ion transport</keyword>
<keyword id="KW-0406">Ion transport</keyword>
<keyword id="KW-0472">Membrane</keyword>
<keyword id="KW-1185">Reference proteome</keyword>
<keyword id="KW-0813">Transport</keyword>
<gene>
    <name type="primary">atpG</name>
    <name type="ordered locus">Z5231</name>
    <name type="ordered locus">ECs4675</name>
</gene>
<organism>
    <name type="scientific">Escherichia coli O157:H7</name>
    <dbReference type="NCBI Taxonomy" id="83334"/>
    <lineage>
        <taxon>Bacteria</taxon>
        <taxon>Pseudomonadati</taxon>
        <taxon>Pseudomonadota</taxon>
        <taxon>Gammaproteobacteria</taxon>
        <taxon>Enterobacterales</taxon>
        <taxon>Enterobacteriaceae</taxon>
        <taxon>Escherichia</taxon>
    </lineage>
</organism>
<evidence type="ECO:0000250" key="1"/>
<evidence type="ECO:0000305" key="2"/>
<proteinExistence type="inferred from homology"/>
<feature type="chain" id="PRO_0000073283" description="ATP synthase gamma chain">
    <location>
        <begin position="1"/>
        <end position="287"/>
    </location>
</feature>
<comment type="function">
    <text evidence="1">Produces ATP from ADP in the presence of a proton gradient across the membrane. The gamma chain is believed to be important in regulating ATPase activity and the flow of protons through the CF(0) complex (By similarity).</text>
</comment>
<comment type="subunit">
    <text evidence="1">F-type ATPases have 2 components, CF(1) - the catalytic core - and CF(0) - the membrane proton channel. CF(1) has five subunits: alpha(3), beta(3), gamma(1), delta(1), epsilon(1). CF(0) has three main subunits: a, b and c (By similarity).</text>
</comment>
<comment type="subcellular location">
    <subcellularLocation>
        <location evidence="1">Cell inner membrane</location>
        <topology evidence="1">Peripheral membrane protein</topology>
    </subcellularLocation>
</comment>
<comment type="similarity">
    <text evidence="2">Belongs to the ATPase gamma chain family.</text>
</comment>
<reference key="1">
    <citation type="journal article" date="2001" name="Nature">
        <title>Genome sequence of enterohaemorrhagic Escherichia coli O157:H7.</title>
        <authorList>
            <person name="Perna N.T."/>
            <person name="Plunkett G. III"/>
            <person name="Burland V."/>
            <person name="Mau B."/>
            <person name="Glasner J.D."/>
            <person name="Rose D.J."/>
            <person name="Mayhew G.F."/>
            <person name="Evans P.S."/>
            <person name="Gregor J."/>
            <person name="Kirkpatrick H.A."/>
            <person name="Posfai G."/>
            <person name="Hackett J."/>
            <person name="Klink S."/>
            <person name="Boutin A."/>
            <person name="Shao Y."/>
            <person name="Miller L."/>
            <person name="Grotbeck E.J."/>
            <person name="Davis N.W."/>
            <person name="Lim A."/>
            <person name="Dimalanta E.T."/>
            <person name="Potamousis K."/>
            <person name="Apodaca J."/>
            <person name="Anantharaman T.S."/>
            <person name="Lin J."/>
            <person name="Yen G."/>
            <person name="Schwartz D.C."/>
            <person name="Welch R.A."/>
            <person name="Blattner F.R."/>
        </authorList>
    </citation>
    <scope>NUCLEOTIDE SEQUENCE [LARGE SCALE GENOMIC DNA]</scope>
    <source>
        <strain>O157:H7 / EDL933 / ATCC 700927 / EHEC</strain>
    </source>
</reference>
<reference key="2">
    <citation type="journal article" date="2001" name="DNA Res.">
        <title>Complete genome sequence of enterohemorrhagic Escherichia coli O157:H7 and genomic comparison with a laboratory strain K-12.</title>
        <authorList>
            <person name="Hayashi T."/>
            <person name="Makino K."/>
            <person name="Ohnishi M."/>
            <person name="Kurokawa K."/>
            <person name="Ishii K."/>
            <person name="Yokoyama K."/>
            <person name="Han C.-G."/>
            <person name="Ohtsubo E."/>
            <person name="Nakayama K."/>
            <person name="Murata T."/>
            <person name="Tanaka M."/>
            <person name="Tobe T."/>
            <person name="Iida T."/>
            <person name="Takami H."/>
            <person name="Honda T."/>
            <person name="Sasakawa C."/>
            <person name="Ogasawara N."/>
            <person name="Yasunaga T."/>
            <person name="Kuhara S."/>
            <person name="Shiba T."/>
            <person name="Hattori M."/>
            <person name="Shinagawa H."/>
        </authorList>
    </citation>
    <scope>NUCLEOTIDE SEQUENCE [LARGE SCALE GENOMIC DNA]</scope>
    <source>
        <strain>O157:H7 / Sakai / RIMD 0509952 / EHEC</strain>
    </source>
</reference>
<dbReference type="EMBL" id="AE005174">
    <property type="protein sequence ID" value="AAG58936.1"/>
    <property type="molecule type" value="Genomic_DNA"/>
</dbReference>
<dbReference type="EMBL" id="BA000007">
    <property type="protein sequence ID" value="BAB38098.1"/>
    <property type="molecule type" value="Genomic_DNA"/>
</dbReference>
<dbReference type="PIR" id="C91213">
    <property type="entry name" value="C91213"/>
</dbReference>
<dbReference type="PIR" id="D86059">
    <property type="entry name" value="D86059"/>
</dbReference>
<dbReference type="RefSeq" id="NP_312702.1">
    <property type="nucleotide sequence ID" value="NC_002695.1"/>
</dbReference>
<dbReference type="RefSeq" id="WP_000896498.1">
    <property type="nucleotide sequence ID" value="NZ_VOAI01000011.1"/>
</dbReference>
<dbReference type="SMR" id="P0ABA8"/>
<dbReference type="MINT" id="P0ABA8"/>
<dbReference type="STRING" id="155864.Z5231"/>
<dbReference type="GeneID" id="915357"/>
<dbReference type="GeneID" id="93778234"/>
<dbReference type="KEGG" id="ece:Z5231"/>
<dbReference type="KEGG" id="ecs:ECs_4675"/>
<dbReference type="PATRIC" id="fig|386585.9.peg.4880"/>
<dbReference type="eggNOG" id="COG0224">
    <property type="taxonomic scope" value="Bacteria"/>
</dbReference>
<dbReference type="HOGENOM" id="CLU_050669_0_1_6"/>
<dbReference type="OMA" id="MQITSAM"/>
<dbReference type="Proteomes" id="UP000000558">
    <property type="component" value="Chromosome"/>
</dbReference>
<dbReference type="Proteomes" id="UP000002519">
    <property type="component" value="Chromosome"/>
</dbReference>
<dbReference type="GO" id="GO:0005886">
    <property type="term" value="C:plasma membrane"/>
    <property type="evidence" value="ECO:0007669"/>
    <property type="project" value="UniProtKB-SubCell"/>
</dbReference>
<dbReference type="GO" id="GO:0045259">
    <property type="term" value="C:proton-transporting ATP synthase complex"/>
    <property type="evidence" value="ECO:0007669"/>
    <property type="project" value="UniProtKB-KW"/>
</dbReference>
<dbReference type="GO" id="GO:0005524">
    <property type="term" value="F:ATP binding"/>
    <property type="evidence" value="ECO:0007669"/>
    <property type="project" value="UniProtKB-UniRule"/>
</dbReference>
<dbReference type="GO" id="GO:0046933">
    <property type="term" value="F:proton-transporting ATP synthase activity, rotational mechanism"/>
    <property type="evidence" value="ECO:0007669"/>
    <property type="project" value="UniProtKB-UniRule"/>
</dbReference>
<dbReference type="GO" id="GO:0042777">
    <property type="term" value="P:proton motive force-driven plasma membrane ATP synthesis"/>
    <property type="evidence" value="ECO:0007669"/>
    <property type="project" value="UniProtKB-UniRule"/>
</dbReference>
<dbReference type="CDD" id="cd12151">
    <property type="entry name" value="F1-ATPase_gamma"/>
    <property type="match status" value="1"/>
</dbReference>
<dbReference type="FunFam" id="1.10.287.80:FF:000005">
    <property type="entry name" value="ATP synthase gamma chain"/>
    <property type="match status" value="2"/>
</dbReference>
<dbReference type="FunFam" id="3.40.1380.10:FF:000001">
    <property type="entry name" value="ATP synthase gamma chain"/>
    <property type="match status" value="1"/>
</dbReference>
<dbReference type="Gene3D" id="3.40.1380.10">
    <property type="match status" value="1"/>
</dbReference>
<dbReference type="Gene3D" id="1.10.287.80">
    <property type="entry name" value="ATP synthase, gamma subunit, helix hairpin domain"/>
    <property type="match status" value="1"/>
</dbReference>
<dbReference type="HAMAP" id="MF_00815">
    <property type="entry name" value="ATP_synth_gamma_bact"/>
    <property type="match status" value="1"/>
</dbReference>
<dbReference type="InterPro" id="IPR035968">
    <property type="entry name" value="ATP_synth_F1_ATPase_gsu"/>
</dbReference>
<dbReference type="InterPro" id="IPR000131">
    <property type="entry name" value="ATP_synth_F1_gsu"/>
</dbReference>
<dbReference type="InterPro" id="IPR023632">
    <property type="entry name" value="ATP_synth_F1_gsu_CS"/>
</dbReference>
<dbReference type="NCBIfam" id="TIGR01146">
    <property type="entry name" value="ATPsyn_F1gamma"/>
    <property type="match status" value="1"/>
</dbReference>
<dbReference type="NCBIfam" id="NF004144">
    <property type="entry name" value="PRK05621.1-1"/>
    <property type="match status" value="1"/>
</dbReference>
<dbReference type="PANTHER" id="PTHR11693">
    <property type="entry name" value="ATP SYNTHASE GAMMA CHAIN"/>
    <property type="match status" value="1"/>
</dbReference>
<dbReference type="PANTHER" id="PTHR11693:SF22">
    <property type="entry name" value="ATP SYNTHASE SUBUNIT GAMMA, MITOCHONDRIAL"/>
    <property type="match status" value="1"/>
</dbReference>
<dbReference type="Pfam" id="PF00231">
    <property type="entry name" value="ATP-synt"/>
    <property type="match status" value="1"/>
</dbReference>
<dbReference type="PRINTS" id="PR00126">
    <property type="entry name" value="ATPASEGAMMA"/>
</dbReference>
<dbReference type="SUPFAM" id="SSF52943">
    <property type="entry name" value="ATP synthase (F1-ATPase), gamma subunit"/>
    <property type="match status" value="1"/>
</dbReference>
<dbReference type="PROSITE" id="PS00153">
    <property type="entry name" value="ATPASE_GAMMA"/>
    <property type="match status" value="1"/>
</dbReference>